<dbReference type="EMBL" id="CP001147">
    <property type="protein sequence ID" value="ACI20228.1"/>
    <property type="molecule type" value="Genomic_DNA"/>
</dbReference>
<dbReference type="RefSeq" id="WP_012544966.1">
    <property type="nucleotide sequence ID" value="NC_011296.1"/>
</dbReference>
<dbReference type="RefSeq" id="YP_002248998.1">
    <property type="nucleotide sequence ID" value="NC_011296.1"/>
</dbReference>
<dbReference type="SMR" id="B5YL83"/>
<dbReference type="STRING" id="289376.THEYE_A1177"/>
<dbReference type="EnsemblBacteria" id="ACI20228">
    <property type="protein sequence ID" value="ACI20228"/>
    <property type="gene ID" value="THEYE_A1177"/>
</dbReference>
<dbReference type="KEGG" id="tye:THEYE_A1177"/>
<dbReference type="PATRIC" id="fig|289376.4.peg.1153"/>
<dbReference type="eggNOG" id="COG1492">
    <property type="taxonomic scope" value="Bacteria"/>
</dbReference>
<dbReference type="HOGENOM" id="CLU_019250_2_2_0"/>
<dbReference type="InParanoid" id="B5YL83"/>
<dbReference type="OrthoDB" id="9808302at2"/>
<dbReference type="UniPathway" id="UPA00148"/>
<dbReference type="Proteomes" id="UP000000718">
    <property type="component" value="Chromosome"/>
</dbReference>
<dbReference type="GO" id="GO:0015420">
    <property type="term" value="F:ABC-type vitamin B12 transporter activity"/>
    <property type="evidence" value="ECO:0007669"/>
    <property type="project" value="UniProtKB-UniRule"/>
</dbReference>
<dbReference type="GO" id="GO:0003824">
    <property type="term" value="F:catalytic activity"/>
    <property type="evidence" value="ECO:0007669"/>
    <property type="project" value="InterPro"/>
</dbReference>
<dbReference type="GO" id="GO:0009236">
    <property type="term" value="P:cobalamin biosynthetic process"/>
    <property type="evidence" value="ECO:0007669"/>
    <property type="project" value="UniProtKB-UniRule"/>
</dbReference>
<dbReference type="CDD" id="cd05389">
    <property type="entry name" value="CobQ_N"/>
    <property type="match status" value="1"/>
</dbReference>
<dbReference type="CDD" id="cd01750">
    <property type="entry name" value="GATase1_CobQ"/>
    <property type="match status" value="1"/>
</dbReference>
<dbReference type="Gene3D" id="3.40.50.880">
    <property type="match status" value="1"/>
</dbReference>
<dbReference type="Gene3D" id="3.40.50.300">
    <property type="entry name" value="P-loop containing nucleotide triphosphate hydrolases"/>
    <property type="match status" value="1"/>
</dbReference>
<dbReference type="HAMAP" id="MF_00028">
    <property type="entry name" value="CobQ"/>
    <property type="match status" value="1"/>
</dbReference>
<dbReference type="InterPro" id="IPR029062">
    <property type="entry name" value="Class_I_gatase-like"/>
</dbReference>
<dbReference type="InterPro" id="IPR002586">
    <property type="entry name" value="CobQ/CobB/MinD/ParA_Nub-bd_dom"/>
</dbReference>
<dbReference type="InterPro" id="IPR033949">
    <property type="entry name" value="CobQ_GATase1"/>
</dbReference>
<dbReference type="InterPro" id="IPR047045">
    <property type="entry name" value="CobQ_N"/>
</dbReference>
<dbReference type="InterPro" id="IPR004459">
    <property type="entry name" value="CobQ_synth"/>
</dbReference>
<dbReference type="InterPro" id="IPR011698">
    <property type="entry name" value="GATase_3"/>
</dbReference>
<dbReference type="InterPro" id="IPR027417">
    <property type="entry name" value="P-loop_NTPase"/>
</dbReference>
<dbReference type="NCBIfam" id="TIGR00313">
    <property type="entry name" value="cobQ"/>
    <property type="match status" value="1"/>
</dbReference>
<dbReference type="NCBIfam" id="NF001989">
    <property type="entry name" value="PRK00784.1"/>
    <property type="match status" value="1"/>
</dbReference>
<dbReference type="PANTHER" id="PTHR21343:SF1">
    <property type="entry name" value="COBYRIC ACID SYNTHASE"/>
    <property type="match status" value="1"/>
</dbReference>
<dbReference type="PANTHER" id="PTHR21343">
    <property type="entry name" value="DETHIOBIOTIN SYNTHETASE"/>
    <property type="match status" value="1"/>
</dbReference>
<dbReference type="Pfam" id="PF01656">
    <property type="entry name" value="CbiA"/>
    <property type="match status" value="1"/>
</dbReference>
<dbReference type="Pfam" id="PF07685">
    <property type="entry name" value="GATase_3"/>
    <property type="match status" value="1"/>
</dbReference>
<dbReference type="SUPFAM" id="SSF52317">
    <property type="entry name" value="Class I glutamine amidotransferase-like"/>
    <property type="match status" value="1"/>
</dbReference>
<dbReference type="SUPFAM" id="SSF52540">
    <property type="entry name" value="P-loop containing nucleoside triphosphate hydrolases"/>
    <property type="match status" value="1"/>
</dbReference>
<dbReference type="PROSITE" id="PS51274">
    <property type="entry name" value="GATASE_COBBQ"/>
    <property type="match status" value="1"/>
</dbReference>
<name>COBQ_THEYD</name>
<organism>
    <name type="scientific">Thermodesulfovibrio yellowstonii (strain ATCC 51303 / DSM 11347 / YP87)</name>
    <dbReference type="NCBI Taxonomy" id="289376"/>
    <lineage>
        <taxon>Bacteria</taxon>
        <taxon>Pseudomonadati</taxon>
        <taxon>Nitrospirota</taxon>
        <taxon>Thermodesulfovibrionia</taxon>
        <taxon>Thermodesulfovibrionales</taxon>
        <taxon>Thermodesulfovibrionaceae</taxon>
        <taxon>Thermodesulfovibrio</taxon>
    </lineage>
</organism>
<gene>
    <name evidence="1" type="primary">cobQ</name>
    <name type="ordered locus">THEYE_A1177</name>
</gene>
<protein>
    <recommendedName>
        <fullName evidence="1">Cobyric acid synthase</fullName>
    </recommendedName>
</protein>
<keyword id="KW-0169">Cobalamin biosynthesis</keyword>
<keyword id="KW-0315">Glutamine amidotransferase</keyword>
<keyword id="KW-1185">Reference proteome</keyword>
<proteinExistence type="inferred from homology"/>
<evidence type="ECO:0000255" key="1">
    <source>
        <dbReference type="HAMAP-Rule" id="MF_00028"/>
    </source>
</evidence>
<reference key="1">
    <citation type="submission" date="2008-08" db="EMBL/GenBank/DDBJ databases">
        <title>The complete genome sequence of Thermodesulfovibrio yellowstonii strain ATCC 51303 / DSM 11347 / YP87.</title>
        <authorList>
            <person name="Dodson R.J."/>
            <person name="Durkin A.S."/>
            <person name="Wu M."/>
            <person name="Eisen J."/>
            <person name="Sutton G."/>
        </authorList>
    </citation>
    <scope>NUCLEOTIDE SEQUENCE [LARGE SCALE GENOMIC DNA]</scope>
    <source>
        <strain>ATCC 51303 / DSM 11347 / YP87</strain>
    </source>
</reference>
<feature type="chain" id="PRO_1000090251" description="Cobyric acid synthase">
    <location>
        <begin position="1"/>
        <end position="493"/>
    </location>
</feature>
<feature type="domain" description="GATase cobBQ-type" evidence="1">
    <location>
        <begin position="252"/>
        <end position="440"/>
    </location>
</feature>
<feature type="active site" description="Nucleophile" evidence="1">
    <location>
        <position position="333"/>
    </location>
</feature>
<feature type="active site" evidence="1">
    <location>
        <position position="432"/>
    </location>
</feature>
<accession>B5YL83</accession>
<sequence length="493" mass="55213">MAKLLMIQGTSSNCGKSLIVTALCRITKNRGIKVAPFKAQNMSLQSFITEDGGEIGLAQAIQAEAAGVVPNVHMNPVLLKPSGQQGIQIVVHGKLYKTLNSIDFYSEKKKLWENVTDSLNYLLKEHDFLIIEGAGSPAEINLLEKDIVNMAVAEYLKAPVILVGDIDRGGVFASLYGTVKLLEKYDSLFKGFIINKFRGHVDILSPGIKKLEELINKPCLGVVPYLDETGISDEDGVSMRLINFFAQKVNAPVKIVVLRLRYISNFNDFEPLRFEPDTELMYSLKKEDLLSADIIIIPGSKKTFEDLKLLRELKIDQTLRELAKNGVEIIGICGGFQMLGEKLIDPYMVESSLREFDGIGLLPVETLFYPEKITTQVEGCLCSEPSIKITGYEIHKGITYGHLGLFKITRTSMNQTLFDGIVCGNVWGTYIHGIFESDSLRRWLINRHRVKKGLNPIDYSFSWKKLKESFIDTLANTIEKNLDINRVWEIAGL</sequence>
<comment type="function">
    <text evidence="1">Catalyzes amidations at positions B, D, E, and G on adenosylcobyrinic A,C-diamide. NH(2) groups are provided by glutamine, and one molecule of ATP is hydrogenolyzed for each amidation.</text>
</comment>
<comment type="pathway">
    <text evidence="1">Cofactor biosynthesis; adenosylcobalamin biosynthesis.</text>
</comment>
<comment type="similarity">
    <text evidence="1">Belongs to the CobB/CobQ family. CobQ subfamily.</text>
</comment>